<sequence>MSFNHKTIEELHDLLVAKEISATELTQKTLEDIKSREEAVGSFITVSEEAALKQAAAIDAKGIDADNLMSGIPLAVKDNISTKSILTTAASKMLYNYEPIFDATSVANAYAKDMIVIGKTNMDEFAMGGSTETSYFKKTKNAWDHTKVPGGSSGGSATAVASGQVRLSLGSDTGGSIRQPAAFNGVVGLKPTYGTVSRYGLIAFGSSLDQIGPFAPTVKENAQLLNVIASSDVKDATSAPVRIADYTSKIGRDIKGMKIALPKEYLGEGIDPEIKETVLAAAKQFEALGATVEEVSLPHSKYGVAVYYIIASSEASSNLQRFDGIRYGFRADDAKNLDEIYVNTRSQGFGDEVKRRIMLGTFSLSSGYYDAYFKKAGQVRTLIIEDFDKVFADYDLILGPTTPTVAFGLDTLNHDPVAMYLADLLTIPVNLAGLPGISIPAGFVDGLPVGLQLIGPKYTEETIYQAAAAFEAVTDYHKQQPIIFGGDK</sequence>
<protein>
    <recommendedName>
        <fullName evidence="1">Glutamyl-tRNA(Gln) amidotransferase subunit A</fullName>
        <shortName evidence="1">Glu-ADT subunit A</shortName>
        <ecNumber evidence="1">6.3.5.7</ecNumber>
    </recommendedName>
</protein>
<evidence type="ECO:0000255" key="1">
    <source>
        <dbReference type="HAMAP-Rule" id="MF_00120"/>
    </source>
</evidence>
<feature type="chain" id="PRO_1000095171" description="Glutamyl-tRNA(Gln) amidotransferase subunit A">
    <location>
        <begin position="1"/>
        <end position="488"/>
    </location>
</feature>
<feature type="active site" description="Charge relay system" evidence="1">
    <location>
        <position position="77"/>
    </location>
</feature>
<feature type="active site" description="Charge relay system" evidence="1">
    <location>
        <position position="152"/>
    </location>
</feature>
<feature type="active site" description="Acyl-ester intermediate" evidence="1">
    <location>
        <position position="176"/>
    </location>
</feature>
<reference key="1">
    <citation type="journal article" date="2008" name="J. Bacteriol.">
        <title>Genome sequence of a nephritogenic and highly transformable M49 strain of Streptococcus pyogenes.</title>
        <authorList>
            <person name="McShan W.M."/>
            <person name="Ferretti J.J."/>
            <person name="Karasawa T."/>
            <person name="Suvorov A.N."/>
            <person name="Lin S."/>
            <person name="Qin B."/>
            <person name="Jia H."/>
            <person name="Kenton S."/>
            <person name="Najar F."/>
            <person name="Wu H."/>
            <person name="Scott J."/>
            <person name="Roe B.A."/>
            <person name="Savic D.J."/>
        </authorList>
    </citation>
    <scope>NUCLEOTIDE SEQUENCE [LARGE SCALE GENOMIC DNA]</scope>
    <source>
        <strain>NZ131</strain>
    </source>
</reference>
<organism>
    <name type="scientific">Streptococcus pyogenes serotype M49 (strain NZ131)</name>
    <dbReference type="NCBI Taxonomy" id="471876"/>
    <lineage>
        <taxon>Bacteria</taxon>
        <taxon>Bacillati</taxon>
        <taxon>Bacillota</taxon>
        <taxon>Bacilli</taxon>
        <taxon>Lactobacillales</taxon>
        <taxon>Streptococcaceae</taxon>
        <taxon>Streptococcus</taxon>
    </lineage>
</organism>
<accession>B5XHZ9</accession>
<proteinExistence type="inferred from homology"/>
<keyword id="KW-0067">ATP-binding</keyword>
<keyword id="KW-0436">Ligase</keyword>
<keyword id="KW-0547">Nucleotide-binding</keyword>
<keyword id="KW-0648">Protein biosynthesis</keyword>
<dbReference type="EC" id="6.3.5.7" evidence="1"/>
<dbReference type="EMBL" id="CP000829">
    <property type="protein sequence ID" value="ACI61661.1"/>
    <property type="molecule type" value="Genomic_DNA"/>
</dbReference>
<dbReference type="SMR" id="B5XHZ9"/>
<dbReference type="KEGG" id="soz:Spy49_1383c"/>
<dbReference type="HOGENOM" id="CLU_009600_0_3_9"/>
<dbReference type="Proteomes" id="UP000001039">
    <property type="component" value="Chromosome"/>
</dbReference>
<dbReference type="GO" id="GO:0030956">
    <property type="term" value="C:glutamyl-tRNA(Gln) amidotransferase complex"/>
    <property type="evidence" value="ECO:0007669"/>
    <property type="project" value="InterPro"/>
</dbReference>
<dbReference type="GO" id="GO:0005524">
    <property type="term" value="F:ATP binding"/>
    <property type="evidence" value="ECO:0007669"/>
    <property type="project" value="UniProtKB-KW"/>
</dbReference>
<dbReference type="GO" id="GO:0050567">
    <property type="term" value="F:glutaminyl-tRNA synthase (glutamine-hydrolyzing) activity"/>
    <property type="evidence" value="ECO:0007669"/>
    <property type="project" value="UniProtKB-UniRule"/>
</dbReference>
<dbReference type="GO" id="GO:0006412">
    <property type="term" value="P:translation"/>
    <property type="evidence" value="ECO:0007669"/>
    <property type="project" value="UniProtKB-UniRule"/>
</dbReference>
<dbReference type="Gene3D" id="3.90.1300.10">
    <property type="entry name" value="Amidase signature (AS) domain"/>
    <property type="match status" value="1"/>
</dbReference>
<dbReference type="HAMAP" id="MF_00120">
    <property type="entry name" value="GatA"/>
    <property type="match status" value="1"/>
</dbReference>
<dbReference type="InterPro" id="IPR000120">
    <property type="entry name" value="Amidase"/>
</dbReference>
<dbReference type="InterPro" id="IPR020556">
    <property type="entry name" value="Amidase_CS"/>
</dbReference>
<dbReference type="InterPro" id="IPR023631">
    <property type="entry name" value="Amidase_dom"/>
</dbReference>
<dbReference type="InterPro" id="IPR036928">
    <property type="entry name" value="AS_sf"/>
</dbReference>
<dbReference type="InterPro" id="IPR004412">
    <property type="entry name" value="GatA"/>
</dbReference>
<dbReference type="NCBIfam" id="TIGR00132">
    <property type="entry name" value="gatA"/>
    <property type="match status" value="1"/>
</dbReference>
<dbReference type="PANTHER" id="PTHR11895:SF151">
    <property type="entry name" value="GLUTAMYL-TRNA(GLN) AMIDOTRANSFERASE SUBUNIT A"/>
    <property type="match status" value="1"/>
</dbReference>
<dbReference type="PANTHER" id="PTHR11895">
    <property type="entry name" value="TRANSAMIDASE"/>
    <property type="match status" value="1"/>
</dbReference>
<dbReference type="Pfam" id="PF01425">
    <property type="entry name" value="Amidase"/>
    <property type="match status" value="1"/>
</dbReference>
<dbReference type="SUPFAM" id="SSF75304">
    <property type="entry name" value="Amidase signature (AS) enzymes"/>
    <property type="match status" value="1"/>
</dbReference>
<dbReference type="PROSITE" id="PS00571">
    <property type="entry name" value="AMIDASES"/>
    <property type="match status" value="1"/>
</dbReference>
<gene>
    <name evidence="1" type="primary">gatA</name>
    <name type="ordered locus">Spy49_1383c</name>
</gene>
<name>GATA_STRPZ</name>
<comment type="function">
    <text evidence="1">Allows the formation of correctly charged Gln-tRNA(Gln) through the transamidation of misacylated Glu-tRNA(Gln) in organisms which lack glutaminyl-tRNA synthetase. The reaction takes place in the presence of glutamine and ATP through an activated gamma-phospho-Glu-tRNA(Gln).</text>
</comment>
<comment type="catalytic activity">
    <reaction evidence="1">
        <text>L-glutamyl-tRNA(Gln) + L-glutamine + ATP + H2O = L-glutaminyl-tRNA(Gln) + L-glutamate + ADP + phosphate + H(+)</text>
        <dbReference type="Rhea" id="RHEA:17521"/>
        <dbReference type="Rhea" id="RHEA-COMP:9681"/>
        <dbReference type="Rhea" id="RHEA-COMP:9684"/>
        <dbReference type="ChEBI" id="CHEBI:15377"/>
        <dbReference type="ChEBI" id="CHEBI:15378"/>
        <dbReference type="ChEBI" id="CHEBI:29985"/>
        <dbReference type="ChEBI" id="CHEBI:30616"/>
        <dbReference type="ChEBI" id="CHEBI:43474"/>
        <dbReference type="ChEBI" id="CHEBI:58359"/>
        <dbReference type="ChEBI" id="CHEBI:78520"/>
        <dbReference type="ChEBI" id="CHEBI:78521"/>
        <dbReference type="ChEBI" id="CHEBI:456216"/>
        <dbReference type="EC" id="6.3.5.7"/>
    </reaction>
</comment>
<comment type="subunit">
    <text evidence="1">Heterotrimer of A, B and C subunits.</text>
</comment>
<comment type="similarity">
    <text evidence="1">Belongs to the amidase family. GatA subfamily.</text>
</comment>